<feature type="chain" id="PRO_0000304542" description="Mediator of RNA polymerase II transcription subunit 8">
    <location>
        <begin position="1"/>
        <end position="225"/>
    </location>
</feature>
<feature type="region of interest" description="Disordered" evidence="3">
    <location>
        <begin position="1"/>
        <end position="24"/>
    </location>
</feature>
<feature type="coiled-coil region" evidence="2">
    <location>
        <begin position="170"/>
        <end position="204"/>
    </location>
</feature>
<keyword id="KW-0010">Activator</keyword>
<keyword id="KW-0175">Coiled coil</keyword>
<keyword id="KW-0539">Nucleus</keyword>
<keyword id="KW-1185">Reference proteome</keyword>
<keyword id="KW-0804">Transcription</keyword>
<keyword id="KW-0805">Transcription regulation</keyword>
<proteinExistence type="inferred from homology"/>
<dbReference type="EMBL" id="CR382138">
    <property type="protein sequence ID" value="CAR66301.1"/>
    <property type="molecule type" value="Genomic_DNA"/>
</dbReference>
<dbReference type="RefSeq" id="XP_002770775.1">
    <property type="nucleotide sequence ID" value="XM_002770729.1"/>
</dbReference>
<dbReference type="SMR" id="Q6BM45"/>
<dbReference type="FunCoup" id="Q6BM45">
    <property type="interactions" value="161"/>
</dbReference>
<dbReference type="STRING" id="284592.Q6BM45"/>
<dbReference type="GeneID" id="8998918"/>
<dbReference type="KEGG" id="dha:DEHA2F08404g"/>
<dbReference type="VEuPathDB" id="FungiDB:DEHA2F08404g"/>
<dbReference type="eggNOG" id="ENOG502S8U1">
    <property type="taxonomic scope" value="Eukaryota"/>
</dbReference>
<dbReference type="HOGENOM" id="CLU_108151_0_0_1"/>
<dbReference type="InParanoid" id="Q6BM45"/>
<dbReference type="OMA" id="PQWYSLQ"/>
<dbReference type="OrthoDB" id="5329317at2759"/>
<dbReference type="Proteomes" id="UP000000599">
    <property type="component" value="Chromosome F"/>
</dbReference>
<dbReference type="GO" id="GO:0070847">
    <property type="term" value="C:core mediator complex"/>
    <property type="evidence" value="ECO:0007669"/>
    <property type="project" value="TreeGrafter"/>
</dbReference>
<dbReference type="GO" id="GO:0016592">
    <property type="term" value="C:mediator complex"/>
    <property type="evidence" value="ECO:0007669"/>
    <property type="project" value="InterPro"/>
</dbReference>
<dbReference type="GO" id="GO:0000978">
    <property type="term" value="F:RNA polymerase II cis-regulatory region sequence-specific DNA binding"/>
    <property type="evidence" value="ECO:0007669"/>
    <property type="project" value="TreeGrafter"/>
</dbReference>
<dbReference type="GO" id="GO:0003712">
    <property type="term" value="F:transcription coregulator activity"/>
    <property type="evidence" value="ECO:0007669"/>
    <property type="project" value="InterPro"/>
</dbReference>
<dbReference type="GO" id="GO:0006357">
    <property type="term" value="P:regulation of transcription by RNA polymerase II"/>
    <property type="evidence" value="ECO:0007669"/>
    <property type="project" value="InterPro"/>
</dbReference>
<dbReference type="Gene3D" id="1.20.58.1710">
    <property type="match status" value="1"/>
</dbReference>
<dbReference type="Gene3D" id="6.10.250.2610">
    <property type="match status" value="1"/>
</dbReference>
<dbReference type="InterPro" id="IPR019364">
    <property type="entry name" value="Mediatior_Med8_fun/met"/>
</dbReference>
<dbReference type="PANTHER" id="PTHR13074">
    <property type="entry name" value="MEDIATOR OF RNA POLYMERASE II TRANSCRIPTION SUBUNIT 8"/>
    <property type="match status" value="1"/>
</dbReference>
<dbReference type="PANTHER" id="PTHR13074:SF9">
    <property type="entry name" value="MEDIATOR OF RNA POLYMERASE II TRANSCRIPTION SUBUNIT 8"/>
    <property type="match status" value="1"/>
</dbReference>
<dbReference type="Pfam" id="PF10232">
    <property type="entry name" value="Med8"/>
    <property type="match status" value="1"/>
</dbReference>
<comment type="function">
    <text evidence="1">Component of the Mediator complex, a coactivator involved in the regulated transcription of nearly all RNA polymerase II-dependent genes. Mediator functions as a bridge to convey information from gene-specific regulatory proteins to the basal RNA polymerase II transcription machinery. Mediator is recruited to promoters by direct interactions with regulatory proteins and serves as a scaffold for the assembly of a functional preinitiation complex with RNA polymerase II and the general transcription factors (By similarity).</text>
</comment>
<comment type="subunit">
    <text evidence="1">Component of the Mediator complex.</text>
</comment>
<comment type="subcellular location">
    <subcellularLocation>
        <location evidence="4">Nucleus</location>
    </subcellularLocation>
</comment>
<comment type="similarity">
    <text evidence="4">Belongs to the Mediator complex subunit 8 family.</text>
</comment>
<accession>Q6BM45</accession>
<accession>B5RUC3</accession>
<evidence type="ECO:0000250" key="1"/>
<evidence type="ECO:0000255" key="2"/>
<evidence type="ECO:0000256" key="3">
    <source>
        <dbReference type="SAM" id="MobiDB-lite"/>
    </source>
</evidence>
<evidence type="ECO:0000305" key="4"/>
<name>MED8_DEBHA</name>
<gene>
    <name type="primary">MED8</name>
    <name type="ordered locus">DEHA2F08404g</name>
</gene>
<organism>
    <name type="scientific">Debaryomyces hansenii (strain ATCC 36239 / CBS 767 / BCRC 21394 / JCM 1990 / NBRC 0083 / IGC 2968)</name>
    <name type="common">Yeast</name>
    <name type="synonym">Torulaspora hansenii</name>
    <dbReference type="NCBI Taxonomy" id="284592"/>
    <lineage>
        <taxon>Eukaryota</taxon>
        <taxon>Fungi</taxon>
        <taxon>Dikarya</taxon>
        <taxon>Ascomycota</taxon>
        <taxon>Saccharomycotina</taxon>
        <taxon>Pichiomycetes</taxon>
        <taxon>Debaryomycetaceae</taxon>
        <taxon>Debaryomyces</taxon>
    </lineage>
</organism>
<reference key="1">
    <citation type="journal article" date="2004" name="Nature">
        <title>Genome evolution in yeasts.</title>
        <authorList>
            <person name="Dujon B."/>
            <person name="Sherman D."/>
            <person name="Fischer G."/>
            <person name="Durrens P."/>
            <person name="Casaregola S."/>
            <person name="Lafontaine I."/>
            <person name="de Montigny J."/>
            <person name="Marck C."/>
            <person name="Neuveglise C."/>
            <person name="Talla E."/>
            <person name="Goffard N."/>
            <person name="Frangeul L."/>
            <person name="Aigle M."/>
            <person name="Anthouard V."/>
            <person name="Babour A."/>
            <person name="Barbe V."/>
            <person name="Barnay S."/>
            <person name="Blanchin S."/>
            <person name="Beckerich J.-M."/>
            <person name="Beyne E."/>
            <person name="Bleykasten C."/>
            <person name="Boisrame A."/>
            <person name="Boyer J."/>
            <person name="Cattolico L."/>
            <person name="Confanioleri F."/>
            <person name="de Daruvar A."/>
            <person name="Despons L."/>
            <person name="Fabre E."/>
            <person name="Fairhead C."/>
            <person name="Ferry-Dumazet H."/>
            <person name="Groppi A."/>
            <person name="Hantraye F."/>
            <person name="Hennequin C."/>
            <person name="Jauniaux N."/>
            <person name="Joyet P."/>
            <person name="Kachouri R."/>
            <person name="Kerrest A."/>
            <person name="Koszul R."/>
            <person name="Lemaire M."/>
            <person name="Lesur I."/>
            <person name="Ma L."/>
            <person name="Muller H."/>
            <person name="Nicaud J.-M."/>
            <person name="Nikolski M."/>
            <person name="Oztas S."/>
            <person name="Ozier-Kalogeropoulos O."/>
            <person name="Pellenz S."/>
            <person name="Potier S."/>
            <person name="Richard G.-F."/>
            <person name="Straub M.-L."/>
            <person name="Suleau A."/>
            <person name="Swennen D."/>
            <person name="Tekaia F."/>
            <person name="Wesolowski-Louvel M."/>
            <person name="Westhof E."/>
            <person name="Wirth B."/>
            <person name="Zeniou-Meyer M."/>
            <person name="Zivanovic Y."/>
            <person name="Bolotin-Fukuhara M."/>
            <person name="Thierry A."/>
            <person name="Bouchier C."/>
            <person name="Caudron B."/>
            <person name="Scarpelli C."/>
            <person name="Gaillardin C."/>
            <person name="Weissenbach J."/>
            <person name="Wincker P."/>
            <person name="Souciet J.-L."/>
        </authorList>
    </citation>
    <scope>NUCLEOTIDE SEQUENCE [LARGE SCALE GENOMIC DNA]</scope>
    <source>
        <strain>ATCC 36239 / CBS 767 / BCRC 21394 / JCM 1990 / NBRC 0083 / IGC 2968</strain>
    </source>
</reference>
<sequence length="225" mass="26203">MNSIHSANSNTVSTSEINTSQIPTDSLESIRNRLNQVHLSLRKLSDQINHHNRHPNKVKLPNYAQFQNQFQVLLTQLHTITSDLENNDELLKNTNVYPLPSFPTTQQEGLITTLLRKKPLPEVDEWIESAIDKRKNEYVNVQKDDEFAQWCLTKIEELREDFQFYGFNSVEELKYLDSEDEKKETEENKKIENQKYEEELKITAGGKSGLHPNRVLKFMCQGVLT</sequence>
<protein>
    <recommendedName>
        <fullName>Mediator of RNA polymerase II transcription subunit 8</fullName>
    </recommendedName>
    <alternativeName>
        <fullName>Mediator complex subunit 8</fullName>
    </alternativeName>
</protein>